<name>TPN32_TREPA</name>
<protein>
    <recommendedName>
        <fullName>Membrane lipoprotein TpN32</fullName>
    </recommendedName>
    <alternativeName>
        <fullName>29 kDa protein</fullName>
    </alternativeName>
</protein>
<proteinExistence type="evidence at protein level"/>
<keyword id="KW-0002">3D-structure</keyword>
<keyword id="KW-1003">Cell membrane</keyword>
<keyword id="KW-0449">Lipoprotein</keyword>
<keyword id="KW-0472">Membrane</keyword>
<keyword id="KW-0564">Palmitate</keyword>
<keyword id="KW-1185">Reference proteome</keyword>
<keyword id="KW-0732">Signal</keyword>
<sequence length="268" mass="29081">MKGKTVSAALVGKLIALSVGVVACTQVKDETVGVGVLSEPHARLLEIAKEEVKKQHIELRIVEFTNYVALNEAVMRGDILMNFFQHVPHMQQFNQEHNGDLVSVGNVHVEPLALYSRTYRHVSDFPAGAVIAIPNDSSNEARALRLLEAAGFIRMRAGSGLFATVEDVQQNVRNVVLQEVESALLPRVFDQVDGAVINGNYAIMAGLSARRDGLAVEPDASAYANVLVVKRGNEADARVQAVLRALCGGRVRTYLKERYKGGEVAPAL</sequence>
<gene>
    <name type="primary">tpn32</name>
    <name type="ordered locus">TP_0821</name>
</gene>
<dbReference type="EMBL" id="U97358">
    <property type="protein sequence ID" value="AAB63362.1"/>
    <property type="molecule type" value="Genomic_DNA"/>
</dbReference>
<dbReference type="EMBL" id="U93844">
    <property type="protein sequence ID" value="AAB61267.1"/>
    <property type="molecule type" value="Genomic_DNA"/>
</dbReference>
<dbReference type="EMBL" id="AE000520">
    <property type="protein sequence ID" value="AAC65789.1"/>
    <property type="molecule type" value="Genomic_DNA"/>
</dbReference>
<dbReference type="PIR" id="G71275">
    <property type="entry name" value="G71275"/>
</dbReference>
<dbReference type="RefSeq" id="WP_010882265.1">
    <property type="nucleotide sequence ID" value="NC_021490.2"/>
</dbReference>
<dbReference type="PDB" id="1XS5">
    <property type="method" value="X-ray"/>
    <property type="resolution" value="1.85 A"/>
    <property type="chains" value="A=28-268"/>
</dbReference>
<dbReference type="PDBsum" id="1XS5"/>
<dbReference type="SMR" id="O07950"/>
<dbReference type="STRING" id="243276.TP_0821"/>
<dbReference type="EnsemblBacteria" id="AAC65789">
    <property type="protein sequence ID" value="AAC65789"/>
    <property type="gene ID" value="TP_0821"/>
</dbReference>
<dbReference type="KEGG" id="tpa:TP_0821"/>
<dbReference type="KEGG" id="tpw:TPANIC_0821"/>
<dbReference type="eggNOG" id="COG1464">
    <property type="taxonomic scope" value="Bacteria"/>
</dbReference>
<dbReference type="HOGENOM" id="CLU_067080_0_0_12"/>
<dbReference type="OrthoDB" id="9812878at2"/>
<dbReference type="EvolutionaryTrace" id="O07950"/>
<dbReference type="Proteomes" id="UP000000811">
    <property type="component" value="Chromosome"/>
</dbReference>
<dbReference type="GO" id="GO:0005886">
    <property type="term" value="C:plasma membrane"/>
    <property type="evidence" value="ECO:0007669"/>
    <property type="project" value="UniProtKB-SubCell"/>
</dbReference>
<dbReference type="CDD" id="cd13597">
    <property type="entry name" value="PBP2_lipoprotein_Tp32"/>
    <property type="match status" value="1"/>
</dbReference>
<dbReference type="Gene3D" id="3.40.190.10">
    <property type="entry name" value="Periplasmic binding protein-like II"/>
    <property type="match status" value="2"/>
</dbReference>
<dbReference type="InterPro" id="IPR004872">
    <property type="entry name" value="Lipoprotein_NlpA"/>
</dbReference>
<dbReference type="PANTHER" id="PTHR30429">
    <property type="entry name" value="D-METHIONINE-BINDING LIPOPROTEIN METQ"/>
    <property type="match status" value="1"/>
</dbReference>
<dbReference type="PANTHER" id="PTHR30429:SF0">
    <property type="entry name" value="METHIONINE-BINDING LIPOPROTEIN METQ"/>
    <property type="match status" value="1"/>
</dbReference>
<dbReference type="Pfam" id="PF03180">
    <property type="entry name" value="Lipoprotein_9"/>
    <property type="match status" value="1"/>
</dbReference>
<dbReference type="PIRSF" id="PIRSF002854">
    <property type="entry name" value="MetQ"/>
    <property type="match status" value="1"/>
</dbReference>
<dbReference type="SUPFAM" id="SSF53850">
    <property type="entry name" value="Periplasmic binding protein-like II"/>
    <property type="match status" value="1"/>
</dbReference>
<dbReference type="PROSITE" id="PS51257">
    <property type="entry name" value="PROKAR_LIPOPROTEIN"/>
    <property type="match status" value="1"/>
</dbReference>
<comment type="subcellular location">
    <subcellularLocation>
        <location evidence="2">Cell membrane</location>
        <topology evidence="2">Lipid-anchor</topology>
    </subcellularLocation>
</comment>
<comment type="similarity">
    <text evidence="2">Belongs to the NlpA lipoprotein family.</text>
</comment>
<organism>
    <name type="scientific">Treponema pallidum (strain Nichols)</name>
    <dbReference type="NCBI Taxonomy" id="243276"/>
    <lineage>
        <taxon>Bacteria</taxon>
        <taxon>Pseudomonadati</taxon>
        <taxon>Spirochaetota</taxon>
        <taxon>Spirochaetia</taxon>
        <taxon>Spirochaetales</taxon>
        <taxon>Treponemataceae</taxon>
        <taxon>Treponema</taxon>
    </lineage>
</organism>
<reference key="1">
    <citation type="submission" date="1997-05" db="EMBL/GenBank/DDBJ databases">
        <title>Treponema pallidum 29K protein is homologous to a lipoprotein present in Pasteurella hemolytica and in Haemophilus influenzae type b.</title>
        <authorList>
            <person name="Porcella S.F."/>
            <person name="Radolf J.D."/>
            <person name="Norgard M.V."/>
        </authorList>
    </citation>
    <scope>NUCLEOTIDE SEQUENCE [GENOMIC DNA]</scope>
</reference>
<reference key="2">
    <citation type="submission" date="1997-06" db="EMBL/GenBank/DDBJ databases">
        <title>Treponema pallidum lipoprotein homologue.</title>
        <authorList>
            <person name="Stamm L.V."/>
            <person name="Barnes N.Y."/>
        </authorList>
    </citation>
    <scope>NUCLEOTIDE SEQUENCE [GENOMIC DNA]</scope>
    <source>
        <strain>Nichols</strain>
    </source>
</reference>
<reference key="3">
    <citation type="journal article" date="1998" name="Science">
        <title>Complete genome sequence of Treponema pallidum, the syphilis spirochete.</title>
        <authorList>
            <person name="Fraser C.M."/>
            <person name="Norris S.J."/>
            <person name="Weinstock G.M."/>
            <person name="White O."/>
            <person name="Sutton G.G."/>
            <person name="Dodson R.J."/>
            <person name="Gwinn M.L."/>
            <person name="Hickey E.K."/>
            <person name="Clayton R.A."/>
            <person name="Ketchum K.A."/>
            <person name="Sodergren E."/>
            <person name="Hardham J.M."/>
            <person name="McLeod M.P."/>
            <person name="Salzberg S.L."/>
            <person name="Peterson J.D."/>
            <person name="Khalak H.G."/>
            <person name="Richardson D.L."/>
            <person name="Howell J.K."/>
            <person name="Chidambaram M."/>
            <person name="Utterback T.R."/>
            <person name="McDonald L.A."/>
            <person name="Artiach P."/>
            <person name="Bowman C."/>
            <person name="Cotton M.D."/>
            <person name="Fujii C."/>
            <person name="Garland S.A."/>
            <person name="Hatch B."/>
            <person name="Horst K."/>
            <person name="Roberts K.M."/>
            <person name="Sandusky M."/>
            <person name="Weidman J.F."/>
            <person name="Smith H.O."/>
            <person name="Venter J.C."/>
        </authorList>
    </citation>
    <scope>NUCLEOTIDE SEQUENCE [LARGE SCALE GENOMIC DNA]</scope>
    <source>
        <strain>Nichols</strain>
    </source>
</reference>
<accession>O07950</accession>
<evidence type="ECO:0000255" key="1">
    <source>
        <dbReference type="PROSITE-ProRule" id="PRU00303"/>
    </source>
</evidence>
<evidence type="ECO:0000305" key="2"/>
<evidence type="ECO:0007829" key="3">
    <source>
        <dbReference type="PDB" id="1XS5"/>
    </source>
</evidence>
<feature type="signal peptide" evidence="1">
    <location>
        <begin position="1"/>
        <end position="23"/>
    </location>
</feature>
<feature type="chain" id="PRO_0000019750" description="Membrane lipoprotein TpN32">
    <location>
        <begin position="24"/>
        <end position="268"/>
    </location>
</feature>
<feature type="lipid moiety-binding region" description="N-palmitoyl cysteine" evidence="1">
    <location>
        <position position="24"/>
    </location>
</feature>
<feature type="lipid moiety-binding region" description="S-diacylglycerol cysteine" evidence="1">
    <location>
        <position position="24"/>
    </location>
</feature>
<feature type="strand" evidence="3">
    <location>
        <begin position="30"/>
        <end position="36"/>
    </location>
</feature>
<feature type="helix" evidence="3">
    <location>
        <begin position="41"/>
        <end position="53"/>
    </location>
</feature>
<feature type="turn" evidence="3">
    <location>
        <begin position="54"/>
        <end position="56"/>
    </location>
</feature>
<feature type="strand" evidence="3">
    <location>
        <begin position="57"/>
        <end position="63"/>
    </location>
</feature>
<feature type="helix" evidence="3">
    <location>
        <begin position="67"/>
        <end position="75"/>
    </location>
</feature>
<feature type="strand" evidence="3">
    <location>
        <begin position="78"/>
        <end position="86"/>
    </location>
</feature>
<feature type="helix" evidence="3">
    <location>
        <begin position="87"/>
        <end position="97"/>
    </location>
</feature>
<feature type="strand" evidence="3">
    <location>
        <begin position="101"/>
        <end position="109"/>
    </location>
</feature>
<feature type="strand" evidence="3">
    <location>
        <begin position="113"/>
        <end position="115"/>
    </location>
</feature>
<feature type="helix" evidence="3">
    <location>
        <begin position="122"/>
        <end position="124"/>
    </location>
</feature>
<feature type="strand" evidence="3">
    <location>
        <begin position="130"/>
        <end position="134"/>
    </location>
</feature>
<feature type="helix" evidence="3">
    <location>
        <begin position="137"/>
        <end position="149"/>
    </location>
</feature>
<feature type="helix" evidence="3">
    <location>
        <begin position="165"/>
        <end position="167"/>
    </location>
</feature>
<feature type="strand" evidence="3">
    <location>
        <begin position="168"/>
        <end position="170"/>
    </location>
</feature>
<feature type="strand" evidence="3">
    <location>
        <begin position="176"/>
        <end position="180"/>
    </location>
</feature>
<feature type="helix" evidence="3">
    <location>
        <begin position="182"/>
        <end position="184"/>
    </location>
</feature>
<feature type="helix" evidence="3">
    <location>
        <begin position="185"/>
        <end position="188"/>
    </location>
</feature>
<feature type="helix" evidence="3">
    <location>
        <begin position="189"/>
        <end position="191"/>
    </location>
</feature>
<feature type="strand" evidence="3">
    <location>
        <begin position="192"/>
        <end position="197"/>
    </location>
</feature>
<feature type="helix" evidence="3">
    <location>
        <begin position="199"/>
        <end position="204"/>
    </location>
</feature>
<feature type="turn" evidence="3">
    <location>
        <begin position="209"/>
        <end position="212"/>
    </location>
</feature>
<feature type="strand" evidence="3">
    <location>
        <begin position="214"/>
        <end position="216"/>
    </location>
</feature>
<feature type="helix" evidence="3">
    <location>
        <begin position="220"/>
        <end position="223"/>
    </location>
</feature>
<feature type="strand" evidence="3">
    <location>
        <begin position="225"/>
        <end position="230"/>
    </location>
</feature>
<feature type="helix" evidence="3">
    <location>
        <begin position="237"/>
        <end position="246"/>
    </location>
</feature>
<feature type="helix" evidence="3">
    <location>
        <begin position="249"/>
        <end position="258"/>
    </location>
</feature>
<feature type="strand" evidence="3">
    <location>
        <begin position="262"/>
        <end position="266"/>
    </location>
</feature>